<sequence>MQTLHALLRDIPAPDAEAMARAQQHIDGLLKPPGSLGRLETLAVQLAGMPGLNGTPQVDEKAVLVMCADHGVWDEGVAVSPKIVTAIQAANMTRGTTGVCVLAAQAGAKVHVIDVGIDAEPIPGVVNMRVARGCGNIAVGPAMSRLQAEALLLEVSRYTCDLAQRGVTLFGVGELGMANTTPAAAMVSVFTGSDAKEVVGIGANLPPSRIDNKVDVVRRAIAINQPNPRDGIDVLSKVGGFDLVGMTGVMLGAARCGLPVLLDGFLSYSAALAACQIAPAVRLYLIPSHFSAEKGARIALAHLSMDPYLHMAMRLGEGSGAALAMPIVEAACAMFHNMGELAASNIVLPEGNANAT</sequence>
<accession>B5RBK6</accession>
<organism>
    <name type="scientific">Salmonella gallinarum (strain 287/91 / NCTC 13346)</name>
    <dbReference type="NCBI Taxonomy" id="550538"/>
    <lineage>
        <taxon>Bacteria</taxon>
        <taxon>Pseudomonadati</taxon>
        <taxon>Pseudomonadota</taxon>
        <taxon>Gammaproteobacteria</taxon>
        <taxon>Enterobacterales</taxon>
        <taxon>Enterobacteriaceae</taxon>
        <taxon>Salmonella</taxon>
    </lineage>
</organism>
<proteinExistence type="inferred from homology"/>
<feature type="chain" id="PRO_1000100476" description="Nicotinate-nucleotide--dimethylbenzimidazole phosphoribosyltransferase">
    <location>
        <begin position="1"/>
        <end position="356"/>
    </location>
</feature>
<feature type="active site" description="Proton acceptor" evidence="1">
    <location>
        <position position="317"/>
    </location>
</feature>
<dbReference type="EC" id="2.4.2.21" evidence="1"/>
<dbReference type="EMBL" id="AM933173">
    <property type="protein sequence ID" value="CAR37887.1"/>
    <property type="molecule type" value="Genomic_DNA"/>
</dbReference>
<dbReference type="RefSeq" id="WP_001193971.1">
    <property type="nucleotide sequence ID" value="NC_011274.1"/>
</dbReference>
<dbReference type="SMR" id="B5RBK6"/>
<dbReference type="KEGG" id="seg:SG2040"/>
<dbReference type="HOGENOM" id="CLU_002982_0_0_6"/>
<dbReference type="UniPathway" id="UPA00061">
    <property type="reaction ID" value="UER00516"/>
</dbReference>
<dbReference type="Proteomes" id="UP000008321">
    <property type="component" value="Chromosome"/>
</dbReference>
<dbReference type="GO" id="GO:0008939">
    <property type="term" value="F:nicotinate-nucleotide-dimethylbenzimidazole phosphoribosyltransferase activity"/>
    <property type="evidence" value="ECO:0007669"/>
    <property type="project" value="UniProtKB-UniRule"/>
</dbReference>
<dbReference type="GO" id="GO:0009236">
    <property type="term" value="P:cobalamin biosynthetic process"/>
    <property type="evidence" value="ECO:0007669"/>
    <property type="project" value="UniProtKB-KW"/>
</dbReference>
<dbReference type="CDD" id="cd02439">
    <property type="entry name" value="DMB-PRT_CobT"/>
    <property type="match status" value="1"/>
</dbReference>
<dbReference type="FunFam" id="1.10.1610.10:FF:000001">
    <property type="entry name" value="Nicotinate-nucleotide--dimethylbenzimidazole phosphoribosyltransferase"/>
    <property type="match status" value="1"/>
</dbReference>
<dbReference type="FunFam" id="3.40.50.10210:FF:000001">
    <property type="entry name" value="Nicotinate-nucleotide--dimethylbenzimidazole phosphoribosyltransferase"/>
    <property type="match status" value="1"/>
</dbReference>
<dbReference type="Gene3D" id="1.10.1610.10">
    <property type="match status" value="1"/>
</dbReference>
<dbReference type="Gene3D" id="3.40.50.10210">
    <property type="match status" value="1"/>
</dbReference>
<dbReference type="HAMAP" id="MF_00230">
    <property type="entry name" value="CobT"/>
    <property type="match status" value="1"/>
</dbReference>
<dbReference type="InterPro" id="IPR003200">
    <property type="entry name" value="Nict_dMeBzImd_PRibTrfase"/>
</dbReference>
<dbReference type="InterPro" id="IPR017846">
    <property type="entry name" value="Nict_dMeBzImd_PRibTrfase_bact"/>
</dbReference>
<dbReference type="InterPro" id="IPR023195">
    <property type="entry name" value="Nict_dMeBzImd_PRibTrfase_N"/>
</dbReference>
<dbReference type="InterPro" id="IPR036087">
    <property type="entry name" value="Nict_dMeBzImd_PRibTrfase_sf"/>
</dbReference>
<dbReference type="NCBIfam" id="TIGR03160">
    <property type="entry name" value="cobT_DBIPRT"/>
    <property type="match status" value="1"/>
</dbReference>
<dbReference type="NCBIfam" id="NF000996">
    <property type="entry name" value="PRK00105.1"/>
    <property type="match status" value="1"/>
</dbReference>
<dbReference type="PANTHER" id="PTHR43463">
    <property type="entry name" value="NICOTINATE-NUCLEOTIDE--DIMETHYLBENZIMIDAZOLE PHOSPHORIBOSYLTRANSFERASE"/>
    <property type="match status" value="1"/>
</dbReference>
<dbReference type="PANTHER" id="PTHR43463:SF1">
    <property type="entry name" value="NICOTINATE-NUCLEOTIDE--DIMETHYLBENZIMIDAZOLE PHOSPHORIBOSYLTRANSFERASE"/>
    <property type="match status" value="1"/>
</dbReference>
<dbReference type="Pfam" id="PF02277">
    <property type="entry name" value="DBI_PRT"/>
    <property type="match status" value="1"/>
</dbReference>
<dbReference type="SUPFAM" id="SSF52733">
    <property type="entry name" value="Nicotinate mononucleotide:5,6-dimethylbenzimidazole phosphoribosyltransferase (CobT)"/>
    <property type="match status" value="1"/>
</dbReference>
<comment type="function">
    <text evidence="1">Catalyzes the synthesis of alpha-ribazole-5'-phosphate from nicotinate mononucleotide (NAMN) and 5,6-dimethylbenzimidazole (DMB).</text>
</comment>
<comment type="catalytic activity">
    <reaction evidence="1">
        <text>5,6-dimethylbenzimidazole + nicotinate beta-D-ribonucleotide = alpha-ribazole 5'-phosphate + nicotinate + H(+)</text>
        <dbReference type="Rhea" id="RHEA:11196"/>
        <dbReference type="ChEBI" id="CHEBI:15378"/>
        <dbReference type="ChEBI" id="CHEBI:15890"/>
        <dbReference type="ChEBI" id="CHEBI:32544"/>
        <dbReference type="ChEBI" id="CHEBI:57502"/>
        <dbReference type="ChEBI" id="CHEBI:57918"/>
        <dbReference type="EC" id="2.4.2.21"/>
    </reaction>
</comment>
<comment type="pathway">
    <text evidence="1">Nucleoside biosynthesis; alpha-ribazole biosynthesis; alpha-ribazole from 5,6-dimethylbenzimidazole: step 1/2.</text>
</comment>
<comment type="subunit">
    <text evidence="1">Homodimer.</text>
</comment>
<comment type="similarity">
    <text evidence="1">Belongs to the CobT family.</text>
</comment>
<keyword id="KW-0169">Cobalamin biosynthesis</keyword>
<keyword id="KW-0328">Glycosyltransferase</keyword>
<keyword id="KW-0808">Transferase</keyword>
<protein>
    <recommendedName>
        <fullName evidence="1">Nicotinate-nucleotide--dimethylbenzimidazole phosphoribosyltransferase</fullName>
        <shortName evidence="1">NN:DBI PRT</shortName>
        <ecNumber evidence="1">2.4.2.21</ecNumber>
    </recommendedName>
    <alternativeName>
        <fullName evidence="1">N(1)-alpha-phosphoribosyltransferase</fullName>
    </alternativeName>
</protein>
<evidence type="ECO:0000255" key="1">
    <source>
        <dbReference type="HAMAP-Rule" id="MF_00230"/>
    </source>
</evidence>
<reference key="1">
    <citation type="journal article" date="2008" name="Genome Res.">
        <title>Comparative genome analysis of Salmonella enteritidis PT4 and Salmonella gallinarum 287/91 provides insights into evolutionary and host adaptation pathways.</title>
        <authorList>
            <person name="Thomson N.R."/>
            <person name="Clayton D.J."/>
            <person name="Windhorst D."/>
            <person name="Vernikos G."/>
            <person name="Davidson S."/>
            <person name="Churcher C."/>
            <person name="Quail M.A."/>
            <person name="Stevens M."/>
            <person name="Jones M.A."/>
            <person name="Watson M."/>
            <person name="Barron A."/>
            <person name="Layton A."/>
            <person name="Pickard D."/>
            <person name="Kingsley R.A."/>
            <person name="Bignell A."/>
            <person name="Clark L."/>
            <person name="Harris B."/>
            <person name="Ormond D."/>
            <person name="Abdellah Z."/>
            <person name="Brooks K."/>
            <person name="Cherevach I."/>
            <person name="Chillingworth T."/>
            <person name="Woodward J."/>
            <person name="Norberczak H."/>
            <person name="Lord A."/>
            <person name="Arrowsmith C."/>
            <person name="Jagels K."/>
            <person name="Moule S."/>
            <person name="Mungall K."/>
            <person name="Saunders M."/>
            <person name="Whitehead S."/>
            <person name="Chabalgoity J.A."/>
            <person name="Maskell D."/>
            <person name="Humphreys T."/>
            <person name="Roberts M."/>
            <person name="Barrow P.A."/>
            <person name="Dougan G."/>
            <person name="Parkhill J."/>
        </authorList>
    </citation>
    <scope>NUCLEOTIDE SEQUENCE [LARGE SCALE GENOMIC DNA]</scope>
    <source>
        <strain>287/91 / NCTC 13346</strain>
    </source>
</reference>
<name>COBT_SALG2</name>
<gene>
    <name evidence="1" type="primary">cobT</name>
    <name type="ordered locus">SG2040</name>
</gene>